<dbReference type="EC" id="6.5.1.2" evidence="1"/>
<dbReference type="EMBL" id="CP001277">
    <property type="protein sequence ID" value="ACQ67497.1"/>
    <property type="molecule type" value="Genomic_DNA"/>
</dbReference>
<dbReference type="RefSeq" id="WP_015873317.1">
    <property type="nucleotide sequence ID" value="NC_012751.1"/>
</dbReference>
<dbReference type="SMR" id="C4K4K4"/>
<dbReference type="STRING" id="572265.HDEF_0769"/>
<dbReference type="GeneID" id="66260611"/>
<dbReference type="KEGG" id="hde:HDEF_0769"/>
<dbReference type="eggNOG" id="COG0272">
    <property type="taxonomic scope" value="Bacteria"/>
</dbReference>
<dbReference type="HOGENOM" id="CLU_007764_2_1_6"/>
<dbReference type="Proteomes" id="UP000002334">
    <property type="component" value="Chromosome"/>
</dbReference>
<dbReference type="GO" id="GO:0005829">
    <property type="term" value="C:cytosol"/>
    <property type="evidence" value="ECO:0007669"/>
    <property type="project" value="TreeGrafter"/>
</dbReference>
<dbReference type="GO" id="GO:0003677">
    <property type="term" value="F:DNA binding"/>
    <property type="evidence" value="ECO:0007669"/>
    <property type="project" value="InterPro"/>
</dbReference>
<dbReference type="GO" id="GO:0003911">
    <property type="term" value="F:DNA ligase (NAD+) activity"/>
    <property type="evidence" value="ECO:0007669"/>
    <property type="project" value="UniProtKB-UniRule"/>
</dbReference>
<dbReference type="GO" id="GO:0046872">
    <property type="term" value="F:metal ion binding"/>
    <property type="evidence" value="ECO:0007669"/>
    <property type="project" value="UniProtKB-KW"/>
</dbReference>
<dbReference type="GO" id="GO:0006281">
    <property type="term" value="P:DNA repair"/>
    <property type="evidence" value="ECO:0007669"/>
    <property type="project" value="UniProtKB-KW"/>
</dbReference>
<dbReference type="GO" id="GO:0006260">
    <property type="term" value="P:DNA replication"/>
    <property type="evidence" value="ECO:0007669"/>
    <property type="project" value="UniProtKB-KW"/>
</dbReference>
<dbReference type="CDD" id="cd17748">
    <property type="entry name" value="BRCT_DNA_ligase_like"/>
    <property type="match status" value="1"/>
</dbReference>
<dbReference type="CDD" id="cd00114">
    <property type="entry name" value="LIGANc"/>
    <property type="match status" value="1"/>
</dbReference>
<dbReference type="FunFam" id="1.10.150.20:FF:000006">
    <property type="entry name" value="DNA ligase"/>
    <property type="match status" value="1"/>
</dbReference>
<dbReference type="FunFam" id="1.10.150.20:FF:000007">
    <property type="entry name" value="DNA ligase"/>
    <property type="match status" value="1"/>
</dbReference>
<dbReference type="FunFam" id="1.10.287.610:FF:000002">
    <property type="entry name" value="DNA ligase"/>
    <property type="match status" value="1"/>
</dbReference>
<dbReference type="FunFam" id="2.40.50.140:FF:000012">
    <property type="entry name" value="DNA ligase"/>
    <property type="match status" value="1"/>
</dbReference>
<dbReference type="FunFam" id="3.30.470.30:FF:000001">
    <property type="entry name" value="DNA ligase"/>
    <property type="match status" value="1"/>
</dbReference>
<dbReference type="Gene3D" id="6.20.10.30">
    <property type="match status" value="1"/>
</dbReference>
<dbReference type="Gene3D" id="1.10.150.20">
    <property type="entry name" value="5' to 3' exonuclease, C-terminal subdomain"/>
    <property type="match status" value="2"/>
</dbReference>
<dbReference type="Gene3D" id="3.40.50.10190">
    <property type="entry name" value="BRCT domain"/>
    <property type="match status" value="1"/>
</dbReference>
<dbReference type="Gene3D" id="3.30.470.30">
    <property type="entry name" value="DNA ligase/mRNA capping enzyme"/>
    <property type="match status" value="1"/>
</dbReference>
<dbReference type="Gene3D" id="1.10.287.610">
    <property type="entry name" value="Helix hairpin bin"/>
    <property type="match status" value="1"/>
</dbReference>
<dbReference type="Gene3D" id="2.40.50.140">
    <property type="entry name" value="Nucleic acid-binding proteins"/>
    <property type="match status" value="1"/>
</dbReference>
<dbReference type="HAMAP" id="MF_01588">
    <property type="entry name" value="DNA_ligase_A"/>
    <property type="match status" value="1"/>
</dbReference>
<dbReference type="InterPro" id="IPR001357">
    <property type="entry name" value="BRCT_dom"/>
</dbReference>
<dbReference type="InterPro" id="IPR036420">
    <property type="entry name" value="BRCT_dom_sf"/>
</dbReference>
<dbReference type="InterPro" id="IPR041663">
    <property type="entry name" value="DisA/LigA_HHH"/>
</dbReference>
<dbReference type="InterPro" id="IPR001679">
    <property type="entry name" value="DNA_ligase"/>
</dbReference>
<dbReference type="InterPro" id="IPR018239">
    <property type="entry name" value="DNA_ligase_AS"/>
</dbReference>
<dbReference type="InterPro" id="IPR033136">
    <property type="entry name" value="DNA_ligase_CS"/>
</dbReference>
<dbReference type="InterPro" id="IPR013839">
    <property type="entry name" value="DNAligase_adenylation"/>
</dbReference>
<dbReference type="InterPro" id="IPR013840">
    <property type="entry name" value="DNAligase_N"/>
</dbReference>
<dbReference type="InterPro" id="IPR003583">
    <property type="entry name" value="Hlx-hairpin-Hlx_DNA-bd_motif"/>
</dbReference>
<dbReference type="InterPro" id="IPR012340">
    <property type="entry name" value="NA-bd_OB-fold"/>
</dbReference>
<dbReference type="InterPro" id="IPR004150">
    <property type="entry name" value="NAD_DNA_ligase_OB"/>
</dbReference>
<dbReference type="InterPro" id="IPR010994">
    <property type="entry name" value="RuvA_2-like"/>
</dbReference>
<dbReference type="InterPro" id="IPR004149">
    <property type="entry name" value="Znf_DNAligase_C4"/>
</dbReference>
<dbReference type="NCBIfam" id="TIGR00575">
    <property type="entry name" value="dnlj"/>
    <property type="match status" value="1"/>
</dbReference>
<dbReference type="NCBIfam" id="NF005932">
    <property type="entry name" value="PRK07956.1"/>
    <property type="match status" value="1"/>
</dbReference>
<dbReference type="PANTHER" id="PTHR23389">
    <property type="entry name" value="CHROMOSOME TRANSMISSION FIDELITY FACTOR 18"/>
    <property type="match status" value="1"/>
</dbReference>
<dbReference type="PANTHER" id="PTHR23389:SF9">
    <property type="entry name" value="DNA LIGASE"/>
    <property type="match status" value="1"/>
</dbReference>
<dbReference type="Pfam" id="PF00533">
    <property type="entry name" value="BRCT"/>
    <property type="match status" value="1"/>
</dbReference>
<dbReference type="Pfam" id="PF01653">
    <property type="entry name" value="DNA_ligase_aden"/>
    <property type="match status" value="2"/>
</dbReference>
<dbReference type="Pfam" id="PF03120">
    <property type="entry name" value="DNA_ligase_OB"/>
    <property type="match status" value="1"/>
</dbReference>
<dbReference type="Pfam" id="PF03119">
    <property type="entry name" value="DNA_ligase_ZBD"/>
    <property type="match status" value="1"/>
</dbReference>
<dbReference type="Pfam" id="PF12826">
    <property type="entry name" value="HHH_2"/>
    <property type="match status" value="1"/>
</dbReference>
<dbReference type="Pfam" id="PF14520">
    <property type="entry name" value="HHH_5"/>
    <property type="match status" value="1"/>
</dbReference>
<dbReference type="Pfam" id="PF22745">
    <property type="entry name" value="Nlig-Ia"/>
    <property type="match status" value="1"/>
</dbReference>
<dbReference type="PIRSF" id="PIRSF001604">
    <property type="entry name" value="LigA"/>
    <property type="match status" value="1"/>
</dbReference>
<dbReference type="SMART" id="SM00292">
    <property type="entry name" value="BRCT"/>
    <property type="match status" value="1"/>
</dbReference>
<dbReference type="SMART" id="SM00278">
    <property type="entry name" value="HhH1"/>
    <property type="match status" value="4"/>
</dbReference>
<dbReference type="SMART" id="SM00532">
    <property type="entry name" value="LIGANc"/>
    <property type="match status" value="1"/>
</dbReference>
<dbReference type="SUPFAM" id="SSF52113">
    <property type="entry name" value="BRCT domain"/>
    <property type="match status" value="1"/>
</dbReference>
<dbReference type="SUPFAM" id="SSF56091">
    <property type="entry name" value="DNA ligase/mRNA capping enzyme, catalytic domain"/>
    <property type="match status" value="1"/>
</dbReference>
<dbReference type="SUPFAM" id="SSF50249">
    <property type="entry name" value="Nucleic acid-binding proteins"/>
    <property type="match status" value="1"/>
</dbReference>
<dbReference type="SUPFAM" id="SSF47781">
    <property type="entry name" value="RuvA domain 2-like"/>
    <property type="match status" value="1"/>
</dbReference>
<dbReference type="PROSITE" id="PS50172">
    <property type="entry name" value="BRCT"/>
    <property type="match status" value="1"/>
</dbReference>
<dbReference type="PROSITE" id="PS01055">
    <property type="entry name" value="DNA_LIGASE_N1"/>
    <property type="match status" value="1"/>
</dbReference>
<dbReference type="PROSITE" id="PS01056">
    <property type="entry name" value="DNA_LIGASE_N2"/>
    <property type="match status" value="1"/>
</dbReference>
<evidence type="ECO:0000255" key="1">
    <source>
        <dbReference type="HAMAP-Rule" id="MF_01588"/>
    </source>
</evidence>
<evidence type="ECO:0000256" key="2">
    <source>
        <dbReference type="SAM" id="MobiDB-lite"/>
    </source>
</evidence>
<feature type="chain" id="PRO_0000381944" description="DNA ligase">
    <location>
        <begin position="1"/>
        <end position="702"/>
    </location>
</feature>
<feature type="domain" description="BRCT" evidence="1">
    <location>
        <begin position="616"/>
        <end position="702"/>
    </location>
</feature>
<feature type="region of interest" description="Disordered" evidence="2">
    <location>
        <begin position="104"/>
        <end position="125"/>
    </location>
</feature>
<feature type="active site" description="N6-AMP-lysine intermediate" evidence="1">
    <location>
        <position position="141"/>
    </location>
</feature>
<feature type="binding site" evidence="1">
    <location>
        <begin position="32"/>
        <end position="36"/>
    </location>
    <ligand>
        <name>NAD(+)</name>
        <dbReference type="ChEBI" id="CHEBI:57540"/>
    </ligand>
</feature>
<feature type="binding site" evidence="1">
    <location>
        <begin position="81"/>
        <end position="82"/>
    </location>
    <ligand>
        <name>NAD(+)</name>
        <dbReference type="ChEBI" id="CHEBI:57540"/>
    </ligand>
</feature>
<feature type="binding site" evidence="1">
    <location>
        <position position="139"/>
    </location>
    <ligand>
        <name>NAD(+)</name>
        <dbReference type="ChEBI" id="CHEBI:57540"/>
    </ligand>
</feature>
<feature type="binding site" evidence="1">
    <location>
        <position position="162"/>
    </location>
    <ligand>
        <name>NAD(+)</name>
        <dbReference type="ChEBI" id="CHEBI:57540"/>
    </ligand>
</feature>
<feature type="binding site" evidence="1">
    <location>
        <position position="199"/>
    </location>
    <ligand>
        <name>NAD(+)</name>
        <dbReference type="ChEBI" id="CHEBI:57540"/>
    </ligand>
</feature>
<feature type="binding site" evidence="1">
    <location>
        <position position="316"/>
    </location>
    <ligand>
        <name>NAD(+)</name>
        <dbReference type="ChEBI" id="CHEBI:57540"/>
    </ligand>
</feature>
<feature type="binding site" evidence="1">
    <location>
        <position position="340"/>
    </location>
    <ligand>
        <name>NAD(+)</name>
        <dbReference type="ChEBI" id="CHEBI:57540"/>
    </ligand>
</feature>
<feature type="binding site" evidence="1">
    <location>
        <position position="434"/>
    </location>
    <ligand>
        <name>Zn(2+)</name>
        <dbReference type="ChEBI" id="CHEBI:29105"/>
    </ligand>
</feature>
<feature type="binding site" evidence="1">
    <location>
        <position position="437"/>
    </location>
    <ligand>
        <name>Zn(2+)</name>
        <dbReference type="ChEBI" id="CHEBI:29105"/>
    </ligand>
</feature>
<feature type="binding site" evidence="1">
    <location>
        <position position="452"/>
    </location>
    <ligand>
        <name>Zn(2+)</name>
        <dbReference type="ChEBI" id="CHEBI:29105"/>
    </ligand>
</feature>
<feature type="binding site" evidence="1">
    <location>
        <position position="458"/>
    </location>
    <ligand>
        <name>Zn(2+)</name>
        <dbReference type="ChEBI" id="CHEBI:29105"/>
    </ligand>
</feature>
<name>DNLJ_HAMD5</name>
<reference key="1">
    <citation type="journal article" date="2009" name="Proc. Natl. Acad. Sci. U.S.A.">
        <title>Hamiltonella defensa, genome evolution of protective bacterial endosymbiont from pathogenic ancestors.</title>
        <authorList>
            <person name="Degnan P.H."/>
            <person name="Yu Y."/>
            <person name="Sisneros N."/>
            <person name="Wing R.A."/>
            <person name="Moran N.A."/>
        </authorList>
    </citation>
    <scope>NUCLEOTIDE SEQUENCE [LARGE SCALE GENOMIC DNA]</scope>
    <source>
        <strain>5AT</strain>
    </source>
</reference>
<protein>
    <recommendedName>
        <fullName evidence="1">DNA ligase</fullName>
        <ecNumber evidence="1">6.5.1.2</ecNumber>
    </recommendedName>
    <alternativeName>
        <fullName evidence="1">Polydeoxyribonucleotide synthase [NAD(+)]</fullName>
    </alternativeName>
</protein>
<organism>
    <name type="scientific">Hamiltonella defensa subsp. Acyrthosiphon pisum (strain 5AT)</name>
    <dbReference type="NCBI Taxonomy" id="572265"/>
    <lineage>
        <taxon>Bacteria</taxon>
        <taxon>Pseudomonadati</taxon>
        <taxon>Pseudomonadota</taxon>
        <taxon>Gammaproteobacteria</taxon>
        <taxon>Enterobacterales</taxon>
        <taxon>Enterobacteriaceae</taxon>
        <taxon>aphid secondary symbionts</taxon>
        <taxon>Candidatus Hamiltonella</taxon>
    </lineage>
</organism>
<accession>C4K4K4</accession>
<gene>
    <name evidence="1" type="primary">ligA</name>
    <name type="ordered locus">HDEF_0769</name>
</gene>
<comment type="function">
    <text evidence="1">DNA ligase that catalyzes the formation of phosphodiester linkages between 5'-phosphoryl and 3'-hydroxyl groups in double-stranded DNA using NAD as a coenzyme and as the energy source for the reaction. It is essential for DNA replication and repair of damaged DNA.</text>
</comment>
<comment type="catalytic activity">
    <reaction evidence="1">
        <text>NAD(+) + (deoxyribonucleotide)n-3'-hydroxyl + 5'-phospho-(deoxyribonucleotide)m = (deoxyribonucleotide)n+m + AMP + beta-nicotinamide D-nucleotide.</text>
        <dbReference type="EC" id="6.5.1.2"/>
    </reaction>
</comment>
<comment type="cofactor">
    <cofactor evidence="1">
        <name>Mg(2+)</name>
        <dbReference type="ChEBI" id="CHEBI:18420"/>
    </cofactor>
    <cofactor evidence="1">
        <name>Mn(2+)</name>
        <dbReference type="ChEBI" id="CHEBI:29035"/>
    </cofactor>
</comment>
<comment type="similarity">
    <text evidence="1">Belongs to the NAD-dependent DNA ligase family. LigA subfamily.</text>
</comment>
<sequence length="702" mass="78091">MKSMLEKINQLRDVLKHHEYLYHVNDAPEITDAEYDALLEKLREWESQYPELMNPDSPTQKVGASPSTAFKPVTHQVPMLSLDNVFDEKGFLAFNKRVSERLEAESSAQKASLNPLVRDSDQKNRSEKNVQEALTFCCELKLDGLAVSLIYEKGELTQAATRGNGFQGENITHNIRTIQSIPLRLKGKALPQRIEIRGEVYMPQAGFEKLNKQARANHEKIFSNPRNAAAGSLRQLDPHITAQRPLNFFCYGVGLLEGGVLPQSHIQRLMQLKAWGLPVHDRITLCTGAEQVMAFYQEIAQARATLGFDIDGIVIKVDDVLLQEKLGFLAKAPRWATAFKFPAQEKTTQVLGVEFQVGRTGALTPVARLEPVELGGALVSNANLHNADEIARLGLRIGDTVVVRRAGDVIPQIVNVIIESRPQNTVEIIFPHHCPICKSVAKRIEGEAVIRCTGGLFCPAQRKEALKHFVARRALDIEGLGDKIIHQLVDKKYVQNPADLFHLTSEKLLSLKRMREKSAQNLLNSLKKSQKTTFARFLYALGIREVGETTAANLALYFGQLDLLRKADIETLKKVPDVGEVVAKNLVDFFGNEHHQQVISALESVLDWPDPEPIEKPNHPFRDKTVVLTGSLNAFTRDDLKAHLISLGAKVSGSVSKKTDFLIAGENPGSKAQKAEKSGIKIMNEPELIEFLKALKPEGTKV</sequence>
<keyword id="KW-0227">DNA damage</keyword>
<keyword id="KW-0234">DNA repair</keyword>
<keyword id="KW-0235">DNA replication</keyword>
<keyword id="KW-0436">Ligase</keyword>
<keyword id="KW-0460">Magnesium</keyword>
<keyword id="KW-0464">Manganese</keyword>
<keyword id="KW-0479">Metal-binding</keyword>
<keyword id="KW-0520">NAD</keyword>
<keyword id="KW-0862">Zinc</keyword>
<proteinExistence type="inferred from homology"/>